<accession>Q12HF9</accession>
<reference key="1">
    <citation type="journal article" date="2008" name="Appl. Environ. Microbiol.">
        <title>The genome of Polaromonas sp. strain JS666: insights into the evolution of a hydrocarbon- and xenobiotic-degrading bacterium, and features of relevance to biotechnology.</title>
        <authorList>
            <person name="Mattes T.E."/>
            <person name="Alexander A.K."/>
            <person name="Richardson P.M."/>
            <person name="Munk A.C."/>
            <person name="Han C.S."/>
            <person name="Stothard P."/>
            <person name="Coleman N.V."/>
        </authorList>
    </citation>
    <scope>NUCLEOTIDE SEQUENCE [LARGE SCALE GENOMIC DNA]</scope>
    <source>
        <strain>JS666 / ATCC BAA-500</strain>
    </source>
</reference>
<proteinExistence type="inferred from homology"/>
<sequence length="61" mass="6048">MLKYAIIFAVISLIAGALGFGGVAAGAAGIAKILFGLFLILAVIFVVLAALGVGAVRKGMK</sequence>
<dbReference type="EMBL" id="CP000316">
    <property type="protein sequence ID" value="ABE42033.1"/>
    <property type="molecule type" value="Genomic_DNA"/>
</dbReference>
<dbReference type="RefSeq" id="WP_011481043.1">
    <property type="nucleotide sequence ID" value="NC_007948.1"/>
</dbReference>
<dbReference type="SMR" id="Q12HF9"/>
<dbReference type="STRING" id="296591.Bpro_0066"/>
<dbReference type="KEGG" id="pol:Bpro_0066"/>
<dbReference type="eggNOG" id="COG5487">
    <property type="taxonomic scope" value="Bacteria"/>
</dbReference>
<dbReference type="HOGENOM" id="CLU_187346_1_1_4"/>
<dbReference type="Proteomes" id="UP000001983">
    <property type="component" value="Chromosome"/>
</dbReference>
<dbReference type="GO" id="GO:0005886">
    <property type="term" value="C:plasma membrane"/>
    <property type="evidence" value="ECO:0007669"/>
    <property type="project" value="UniProtKB-SubCell"/>
</dbReference>
<dbReference type="HAMAP" id="MF_01361">
    <property type="entry name" value="UPF0391"/>
    <property type="match status" value="1"/>
</dbReference>
<dbReference type="InterPro" id="IPR009760">
    <property type="entry name" value="DUF1328"/>
</dbReference>
<dbReference type="NCBIfam" id="NF010235">
    <property type="entry name" value="PRK13682.2-6"/>
    <property type="match status" value="1"/>
</dbReference>
<dbReference type="Pfam" id="PF07043">
    <property type="entry name" value="DUF1328"/>
    <property type="match status" value="1"/>
</dbReference>
<dbReference type="PIRSF" id="PIRSF036466">
    <property type="entry name" value="UCP036466"/>
    <property type="match status" value="1"/>
</dbReference>
<gene>
    <name type="ordered locus">Bpro_0066</name>
</gene>
<name>Y066_POLSJ</name>
<evidence type="ECO:0000255" key="1">
    <source>
        <dbReference type="HAMAP-Rule" id="MF_01361"/>
    </source>
</evidence>
<feature type="chain" id="PRO_0000256756" description="UPF0391 membrane protein Bpro_0066">
    <location>
        <begin position="1"/>
        <end position="61"/>
    </location>
</feature>
<feature type="transmembrane region" description="Helical" evidence="1">
    <location>
        <begin position="5"/>
        <end position="25"/>
    </location>
</feature>
<feature type="transmembrane region" description="Helical" evidence="1">
    <location>
        <begin position="33"/>
        <end position="53"/>
    </location>
</feature>
<protein>
    <recommendedName>
        <fullName evidence="1">UPF0391 membrane protein Bpro_0066</fullName>
    </recommendedName>
</protein>
<keyword id="KW-1003">Cell membrane</keyword>
<keyword id="KW-0472">Membrane</keyword>
<keyword id="KW-1185">Reference proteome</keyword>
<keyword id="KW-0812">Transmembrane</keyword>
<keyword id="KW-1133">Transmembrane helix</keyword>
<organism>
    <name type="scientific">Polaromonas sp. (strain JS666 / ATCC BAA-500)</name>
    <dbReference type="NCBI Taxonomy" id="296591"/>
    <lineage>
        <taxon>Bacteria</taxon>
        <taxon>Pseudomonadati</taxon>
        <taxon>Pseudomonadota</taxon>
        <taxon>Betaproteobacteria</taxon>
        <taxon>Burkholderiales</taxon>
        <taxon>Comamonadaceae</taxon>
        <taxon>Polaromonas</taxon>
    </lineage>
</organism>
<comment type="subcellular location">
    <subcellularLocation>
        <location evidence="1">Cell membrane</location>
        <topology evidence="1">Multi-pass membrane protein</topology>
    </subcellularLocation>
</comment>
<comment type="similarity">
    <text evidence="1">Belongs to the UPF0391 family.</text>
</comment>